<accession>B6I635</accession>
<sequence>MSSKEQKTPEGQAPEEIIMDQHEEIEAVEPEASAEQVDPRDEKIANLEAQLAEAQTRERDGILRVKAEMENLRRRTELDIEKAHKFALEKFINELLPVIDSLDRALEVADKANPDMSAMVEGIELTLKSMLDVVRKFGVEVIAETNVPLDPNVHQAIAMVESDDVAPGNVLGIMQKGYTLNGRTIRAAMVTVAKAKA</sequence>
<reference key="1">
    <citation type="journal article" date="2008" name="DNA Res.">
        <title>Complete genome sequence and comparative analysis of the wild-type commensal Escherichia coli strain SE11 isolated from a healthy adult.</title>
        <authorList>
            <person name="Oshima K."/>
            <person name="Toh H."/>
            <person name="Ogura Y."/>
            <person name="Sasamoto H."/>
            <person name="Morita H."/>
            <person name="Park S.-H."/>
            <person name="Ooka T."/>
            <person name="Iyoda S."/>
            <person name="Taylor T.D."/>
            <person name="Hayashi T."/>
            <person name="Itoh K."/>
            <person name="Hattori M."/>
        </authorList>
    </citation>
    <scope>NUCLEOTIDE SEQUENCE [LARGE SCALE GENOMIC DNA]</scope>
    <source>
        <strain>SE11</strain>
    </source>
</reference>
<name>GRPE_ECOSE</name>
<evidence type="ECO:0000255" key="1">
    <source>
        <dbReference type="HAMAP-Rule" id="MF_01151"/>
    </source>
</evidence>
<evidence type="ECO:0000256" key="2">
    <source>
        <dbReference type="SAM" id="MobiDB-lite"/>
    </source>
</evidence>
<gene>
    <name evidence="1" type="primary">grpE</name>
    <name type="ordered locus">ECSE_2897</name>
</gene>
<organism>
    <name type="scientific">Escherichia coli (strain SE11)</name>
    <dbReference type="NCBI Taxonomy" id="409438"/>
    <lineage>
        <taxon>Bacteria</taxon>
        <taxon>Pseudomonadati</taxon>
        <taxon>Pseudomonadota</taxon>
        <taxon>Gammaproteobacteria</taxon>
        <taxon>Enterobacterales</taxon>
        <taxon>Enterobacteriaceae</taxon>
        <taxon>Escherichia</taxon>
    </lineage>
</organism>
<comment type="function">
    <text evidence="1">Participates actively in the response to hyperosmotic and heat shock by preventing the aggregation of stress-denatured proteins, in association with DnaK and GrpE. It is the nucleotide exchange factor for DnaK and may function as a thermosensor. Unfolded proteins bind initially to DnaJ; upon interaction with the DnaJ-bound protein, DnaK hydrolyzes its bound ATP, resulting in the formation of a stable complex. GrpE releases ADP from DnaK; ATP binding to DnaK triggers the release of the substrate protein, thus completing the reaction cycle. Several rounds of ATP-dependent interactions between DnaJ, DnaK and GrpE are required for fully efficient folding.</text>
</comment>
<comment type="subunit">
    <text evidence="1">Homodimer.</text>
</comment>
<comment type="subcellular location">
    <subcellularLocation>
        <location evidence="1">Cytoplasm</location>
    </subcellularLocation>
</comment>
<comment type="similarity">
    <text evidence="1">Belongs to the GrpE family.</text>
</comment>
<proteinExistence type="inferred from homology"/>
<keyword id="KW-0143">Chaperone</keyword>
<keyword id="KW-0963">Cytoplasm</keyword>
<keyword id="KW-0346">Stress response</keyword>
<feature type="chain" id="PRO_1000137566" description="Protein GrpE">
    <location>
        <begin position="1"/>
        <end position="197"/>
    </location>
</feature>
<feature type="region of interest" description="Disordered" evidence="2">
    <location>
        <begin position="1"/>
        <end position="39"/>
    </location>
</feature>
<dbReference type="EMBL" id="AP009240">
    <property type="protein sequence ID" value="BAG78421.1"/>
    <property type="molecule type" value="Genomic_DNA"/>
</dbReference>
<dbReference type="RefSeq" id="WP_001296310.1">
    <property type="nucleotide sequence ID" value="NC_011415.1"/>
</dbReference>
<dbReference type="SMR" id="B6I635"/>
<dbReference type="GeneID" id="93774463"/>
<dbReference type="KEGG" id="ecy:ECSE_2897"/>
<dbReference type="HOGENOM" id="CLU_057217_6_0_6"/>
<dbReference type="Proteomes" id="UP000008199">
    <property type="component" value="Chromosome"/>
</dbReference>
<dbReference type="GO" id="GO:0005829">
    <property type="term" value="C:cytosol"/>
    <property type="evidence" value="ECO:0007669"/>
    <property type="project" value="TreeGrafter"/>
</dbReference>
<dbReference type="GO" id="GO:0000774">
    <property type="term" value="F:adenyl-nucleotide exchange factor activity"/>
    <property type="evidence" value="ECO:0007669"/>
    <property type="project" value="InterPro"/>
</dbReference>
<dbReference type="GO" id="GO:0042803">
    <property type="term" value="F:protein homodimerization activity"/>
    <property type="evidence" value="ECO:0007669"/>
    <property type="project" value="InterPro"/>
</dbReference>
<dbReference type="GO" id="GO:0051087">
    <property type="term" value="F:protein-folding chaperone binding"/>
    <property type="evidence" value="ECO:0007669"/>
    <property type="project" value="InterPro"/>
</dbReference>
<dbReference type="GO" id="GO:0051082">
    <property type="term" value="F:unfolded protein binding"/>
    <property type="evidence" value="ECO:0007669"/>
    <property type="project" value="TreeGrafter"/>
</dbReference>
<dbReference type="GO" id="GO:0006457">
    <property type="term" value="P:protein folding"/>
    <property type="evidence" value="ECO:0007669"/>
    <property type="project" value="InterPro"/>
</dbReference>
<dbReference type="CDD" id="cd00446">
    <property type="entry name" value="GrpE"/>
    <property type="match status" value="1"/>
</dbReference>
<dbReference type="FunFam" id="2.30.22.10:FF:000001">
    <property type="entry name" value="Protein GrpE"/>
    <property type="match status" value="1"/>
</dbReference>
<dbReference type="FunFam" id="3.90.20.20:FF:000001">
    <property type="entry name" value="Protein GrpE"/>
    <property type="match status" value="1"/>
</dbReference>
<dbReference type="Gene3D" id="3.90.20.20">
    <property type="match status" value="1"/>
</dbReference>
<dbReference type="Gene3D" id="2.30.22.10">
    <property type="entry name" value="Head domain of nucleotide exchange factor GrpE"/>
    <property type="match status" value="1"/>
</dbReference>
<dbReference type="HAMAP" id="MF_01151">
    <property type="entry name" value="GrpE"/>
    <property type="match status" value="1"/>
</dbReference>
<dbReference type="InterPro" id="IPR000740">
    <property type="entry name" value="GrpE"/>
</dbReference>
<dbReference type="InterPro" id="IPR013805">
    <property type="entry name" value="GrpE_coiled_coil"/>
</dbReference>
<dbReference type="InterPro" id="IPR009012">
    <property type="entry name" value="GrpE_head"/>
</dbReference>
<dbReference type="NCBIfam" id="NF007655">
    <property type="entry name" value="PRK10325.1"/>
    <property type="match status" value="1"/>
</dbReference>
<dbReference type="NCBIfam" id="NF010738">
    <property type="entry name" value="PRK14140.1"/>
    <property type="match status" value="1"/>
</dbReference>
<dbReference type="NCBIfam" id="NF010748">
    <property type="entry name" value="PRK14150.1"/>
    <property type="match status" value="1"/>
</dbReference>
<dbReference type="PANTHER" id="PTHR21237">
    <property type="entry name" value="GRPE PROTEIN"/>
    <property type="match status" value="1"/>
</dbReference>
<dbReference type="PANTHER" id="PTHR21237:SF23">
    <property type="entry name" value="GRPE PROTEIN HOMOLOG, MITOCHONDRIAL"/>
    <property type="match status" value="1"/>
</dbReference>
<dbReference type="Pfam" id="PF01025">
    <property type="entry name" value="GrpE"/>
    <property type="match status" value="1"/>
</dbReference>
<dbReference type="PRINTS" id="PR00773">
    <property type="entry name" value="GRPEPROTEIN"/>
</dbReference>
<dbReference type="SUPFAM" id="SSF58014">
    <property type="entry name" value="Coiled-coil domain of nucleotide exchange factor GrpE"/>
    <property type="match status" value="1"/>
</dbReference>
<dbReference type="SUPFAM" id="SSF51064">
    <property type="entry name" value="Head domain of nucleotide exchange factor GrpE"/>
    <property type="match status" value="1"/>
</dbReference>
<dbReference type="PROSITE" id="PS01071">
    <property type="entry name" value="GRPE"/>
    <property type="match status" value="1"/>
</dbReference>
<protein>
    <recommendedName>
        <fullName evidence="1">Protein GrpE</fullName>
    </recommendedName>
    <alternativeName>
        <fullName evidence="1">HSP-70 cofactor</fullName>
    </alternativeName>
</protein>